<name>TRPF_LACPL</name>
<proteinExistence type="inferred from homology"/>
<protein>
    <recommendedName>
        <fullName evidence="1">N-(5'-phosphoribosyl)anthranilate isomerase</fullName>
        <shortName evidence="1">PRAI</shortName>
        <ecNumber evidence="1">5.3.1.24</ecNumber>
    </recommendedName>
</protein>
<dbReference type="EC" id="5.3.1.24" evidence="1"/>
<dbReference type="EMBL" id="AL935263">
    <property type="protein sequence ID" value="CCC78961.1"/>
    <property type="molecule type" value="Genomic_DNA"/>
</dbReference>
<dbReference type="RefSeq" id="WP_011101491.1">
    <property type="nucleotide sequence ID" value="NC_004567.2"/>
</dbReference>
<dbReference type="RefSeq" id="YP_004889475.1">
    <property type="nucleotide sequence ID" value="NC_004567.2"/>
</dbReference>
<dbReference type="SMR" id="Q88WI1"/>
<dbReference type="STRING" id="220668.lp_1656"/>
<dbReference type="EnsemblBacteria" id="CCC78961">
    <property type="protein sequence ID" value="CCC78961"/>
    <property type="gene ID" value="lp_1656"/>
</dbReference>
<dbReference type="KEGG" id="lpl:lp_1656"/>
<dbReference type="PATRIC" id="fig|220668.9.peg.1397"/>
<dbReference type="eggNOG" id="COG0135">
    <property type="taxonomic scope" value="Bacteria"/>
</dbReference>
<dbReference type="HOGENOM" id="CLU_076364_1_0_9"/>
<dbReference type="OrthoDB" id="9786954at2"/>
<dbReference type="PhylomeDB" id="Q88WI1"/>
<dbReference type="UniPathway" id="UPA00035">
    <property type="reaction ID" value="UER00042"/>
</dbReference>
<dbReference type="Proteomes" id="UP000000432">
    <property type="component" value="Chromosome"/>
</dbReference>
<dbReference type="GO" id="GO:0004640">
    <property type="term" value="F:phosphoribosylanthranilate isomerase activity"/>
    <property type="evidence" value="ECO:0007669"/>
    <property type="project" value="UniProtKB-UniRule"/>
</dbReference>
<dbReference type="GO" id="GO:0000162">
    <property type="term" value="P:L-tryptophan biosynthetic process"/>
    <property type="evidence" value="ECO:0007669"/>
    <property type="project" value="UniProtKB-UniRule"/>
</dbReference>
<dbReference type="CDD" id="cd00405">
    <property type="entry name" value="PRAI"/>
    <property type="match status" value="1"/>
</dbReference>
<dbReference type="Gene3D" id="3.20.20.70">
    <property type="entry name" value="Aldolase class I"/>
    <property type="match status" value="1"/>
</dbReference>
<dbReference type="HAMAP" id="MF_00135">
    <property type="entry name" value="PRAI"/>
    <property type="match status" value="1"/>
</dbReference>
<dbReference type="InterPro" id="IPR013785">
    <property type="entry name" value="Aldolase_TIM"/>
</dbReference>
<dbReference type="InterPro" id="IPR001240">
    <property type="entry name" value="PRAI_dom"/>
</dbReference>
<dbReference type="InterPro" id="IPR011060">
    <property type="entry name" value="RibuloseP-bd_barrel"/>
</dbReference>
<dbReference type="InterPro" id="IPR044643">
    <property type="entry name" value="TrpF_fam"/>
</dbReference>
<dbReference type="PANTHER" id="PTHR42894">
    <property type="entry name" value="N-(5'-PHOSPHORIBOSYL)ANTHRANILATE ISOMERASE"/>
    <property type="match status" value="1"/>
</dbReference>
<dbReference type="PANTHER" id="PTHR42894:SF1">
    <property type="entry name" value="N-(5'-PHOSPHORIBOSYL)ANTHRANILATE ISOMERASE"/>
    <property type="match status" value="1"/>
</dbReference>
<dbReference type="Pfam" id="PF00697">
    <property type="entry name" value="PRAI"/>
    <property type="match status" value="1"/>
</dbReference>
<dbReference type="SUPFAM" id="SSF51366">
    <property type="entry name" value="Ribulose-phoshate binding barrel"/>
    <property type="match status" value="1"/>
</dbReference>
<reference key="1">
    <citation type="journal article" date="2003" name="Proc. Natl. Acad. Sci. U.S.A.">
        <title>Complete genome sequence of Lactobacillus plantarum WCFS1.</title>
        <authorList>
            <person name="Kleerebezem M."/>
            <person name="Boekhorst J."/>
            <person name="van Kranenburg R."/>
            <person name="Molenaar D."/>
            <person name="Kuipers O.P."/>
            <person name="Leer R."/>
            <person name="Tarchini R."/>
            <person name="Peters S.A."/>
            <person name="Sandbrink H.M."/>
            <person name="Fiers M.W.E.J."/>
            <person name="Stiekema W."/>
            <person name="Klein Lankhorst R.M."/>
            <person name="Bron P.A."/>
            <person name="Hoffer S.M."/>
            <person name="Nierop Groot M.N."/>
            <person name="Kerkhoven R."/>
            <person name="De Vries M."/>
            <person name="Ursing B."/>
            <person name="De Vos W.M."/>
            <person name="Siezen R.J."/>
        </authorList>
    </citation>
    <scope>NUCLEOTIDE SEQUENCE [LARGE SCALE GENOMIC DNA]</scope>
    <source>
        <strain>ATCC BAA-793 / NCIMB 8826 / WCFS1</strain>
    </source>
</reference>
<reference key="2">
    <citation type="journal article" date="2012" name="J. Bacteriol.">
        <title>Complete resequencing and reannotation of the Lactobacillus plantarum WCFS1 genome.</title>
        <authorList>
            <person name="Siezen R.J."/>
            <person name="Francke C."/>
            <person name="Renckens B."/>
            <person name="Boekhorst J."/>
            <person name="Wels M."/>
            <person name="Kleerebezem M."/>
            <person name="van Hijum S.A."/>
        </authorList>
    </citation>
    <scope>NUCLEOTIDE SEQUENCE [LARGE SCALE GENOMIC DNA]</scope>
    <scope>GENOME REANNOTATION</scope>
    <source>
        <strain>ATCC BAA-793 / NCIMB 8826 / WCFS1</strain>
    </source>
</reference>
<sequence>MTQIKICGLMRPADVVMVNQALPDAIGMVFAPGRRRRITMATARQLSQQLDPRIRRVGVFTTNQLSEILALVQQHIIQVVQLHATVDDPRIASLMAAHVPVIQAMTPANATQCQADYLLLDNARPGSGQVLDWNQLQSQRPVRPFILAGGLTPTNIVTAINKVYPAMVDVASGVETAGNKDREKINLMVQRAHQTGVSTPLLTEIRRN</sequence>
<keyword id="KW-0028">Amino-acid biosynthesis</keyword>
<keyword id="KW-0057">Aromatic amino acid biosynthesis</keyword>
<keyword id="KW-0413">Isomerase</keyword>
<keyword id="KW-1185">Reference proteome</keyword>
<keyword id="KW-0822">Tryptophan biosynthesis</keyword>
<accession>Q88WI1</accession>
<accession>F9UP22</accession>
<comment type="catalytic activity">
    <reaction evidence="1">
        <text>N-(5-phospho-beta-D-ribosyl)anthranilate = 1-(2-carboxyphenylamino)-1-deoxy-D-ribulose 5-phosphate</text>
        <dbReference type="Rhea" id="RHEA:21540"/>
        <dbReference type="ChEBI" id="CHEBI:18277"/>
        <dbReference type="ChEBI" id="CHEBI:58613"/>
        <dbReference type="EC" id="5.3.1.24"/>
    </reaction>
</comment>
<comment type="pathway">
    <text evidence="1">Amino-acid biosynthesis; L-tryptophan biosynthesis; L-tryptophan from chorismate: step 3/5.</text>
</comment>
<comment type="similarity">
    <text evidence="1">Belongs to the TrpF family.</text>
</comment>
<gene>
    <name evidence="1" type="primary">trpF</name>
    <name type="ordered locus">lp_1656</name>
</gene>
<evidence type="ECO:0000255" key="1">
    <source>
        <dbReference type="HAMAP-Rule" id="MF_00135"/>
    </source>
</evidence>
<feature type="chain" id="PRO_0000154360" description="N-(5'-phosphoribosyl)anthranilate isomerase">
    <location>
        <begin position="1"/>
        <end position="208"/>
    </location>
</feature>
<organism>
    <name type="scientific">Lactiplantibacillus plantarum (strain ATCC BAA-793 / NCIMB 8826 / WCFS1)</name>
    <name type="common">Lactobacillus plantarum</name>
    <dbReference type="NCBI Taxonomy" id="220668"/>
    <lineage>
        <taxon>Bacteria</taxon>
        <taxon>Bacillati</taxon>
        <taxon>Bacillota</taxon>
        <taxon>Bacilli</taxon>
        <taxon>Lactobacillales</taxon>
        <taxon>Lactobacillaceae</taxon>
        <taxon>Lactiplantibacillus</taxon>
    </lineage>
</organism>